<reference key="1">
    <citation type="submission" date="2005-06" db="EMBL/GenBank/DDBJ databases">
        <authorList>
            <consortium name="NIH - Xenopus Gene Collection (XGC) project"/>
        </authorList>
    </citation>
    <scope>NUCLEOTIDE SEQUENCE [LARGE SCALE MRNA]</scope>
    <source>
        <tissue>Embryo</tissue>
    </source>
</reference>
<evidence type="ECO:0000250" key="1"/>
<evidence type="ECO:0000255" key="2">
    <source>
        <dbReference type="PROSITE-ProRule" id="PRU00159"/>
    </source>
</evidence>
<evidence type="ECO:0000255" key="3">
    <source>
        <dbReference type="PROSITE-ProRule" id="PRU10027"/>
    </source>
</evidence>
<evidence type="ECO:0000256" key="4">
    <source>
        <dbReference type="SAM" id="MobiDB-lite"/>
    </source>
</evidence>
<evidence type="ECO:0000305" key="5"/>
<accession>Q4V862</accession>
<comment type="function">
    <text evidence="1">Member of the cyclin-dependent kinase pair (CDK9/cyclin-T) complex, also called positive transcription elongation factor B (P-TEFb), which is proposed to facilitate the transition from abortive to production elongation by phosphorylating the CTD (C-terminal domain) of the large subunit of RNA polymerase II (RNAP II) and SUPT5H.</text>
</comment>
<comment type="catalytic activity">
    <reaction>
        <text>L-seryl-[protein] + ATP = O-phospho-L-seryl-[protein] + ADP + H(+)</text>
        <dbReference type="Rhea" id="RHEA:17989"/>
        <dbReference type="Rhea" id="RHEA-COMP:9863"/>
        <dbReference type="Rhea" id="RHEA-COMP:11604"/>
        <dbReference type="ChEBI" id="CHEBI:15378"/>
        <dbReference type="ChEBI" id="CHEBI:29999"/>
        <dbReference type="ChEBI" id="CHEBI:30616"/>
        <dbReference type="ChEBI" id="CHEBI:83421"/>
        <dbReference type="ChEBI" id="CHEBI:456216"/>
        <dbReference type="EC" id="2.7.11.22"/>
    </reaction>
</comment>
<comment type="catalytic activity">
    <reaction>
        <text>L-threonyl-[protein] + ATP = O-phospho-L-threonyl-[protein] + ADP + H(+)</text>
        <dbReference type="Rhea" id="RHEA:46608"/>
        <dbReference type="Rhea" id="RHEA-COMP:11060"/>
        <dbReference type="Rhea" id="RHEA-COMP:11605"/>
        <dbReference type="ChEBI" id="CHEBI:15378"/>
        <dbReference type="ChEBI" id="CHEBI:30013"/>
        <dbReference type="ChEBI" id="CHEBI:30616"/>
        <dbReference type="ChEBI" id="CHEBI:61977"/>
        <dbReference type="ChEBI" id="CHEBI:456216"/>
        <dbReference type="EC" id="2.7.11.22"/>
    </reaction>
</comment>
<comment type="catalytic activity">
    <reaction>
        <text>[DNA-directed RNA polymerase] + ATP = phospho-[DNA-directed RNA polymerase] + ADP + H(+)</text>
        <dbReference type="Rhea" id="RHEA:10216"/>
        <dbReference type="Rhea" id="RHEA-COMP:11321"/>
        <dbReference type="Rhea" id="RHEA-COMP:11322"/>
        <dbReference type="ChEBI" id="CHEBI:15378"/>
        <dbReference type="ChEBI" id="CHEBI:30616"/>
        <dbReference type="ChEBI" id="CHEBI:43176"/>
        <dbReference type="ChEBI" id="CHEBI:68546"/>
        <dbReference type="ChEBI" id="CHEBI:456216"/>
        <dbReference type="EC" id="2.7.11.23"/>
    </reaction>
</comment>
<comment type="subunit">
    <text evidence="1">Associates with cyclin-T to form P-TEFb.</text>
</comment>
<comment type="subcellular location">
    <subcellularLocation>
        <location evidence="1">Nucleus</location>
    </subcellularLocation>
</comment>
<comment type="similarity">
    <text evidence="5">Belongs to the protein kinase superfamily. CMGC Ser/Thr protein kinase family. CDC2/CDKX subfamily.</text>
</comment>
<dbReference type="EC" id="2.7.11.22"/>
<dbReference type="EC" id="2.7.11.23"/>
<dbReference type="EMBL" id="BC097527">
    <property type="protein sequence ID" value="AAH97527.1"/>
    <property type="molecule type" value="mRNA"/>
</dbReference>
<dbReference type="RefSeq" id="NP_001090029.1">
    <property type="nucleotide sequence ID" value="NM_001096560.1"/>
</dbReference>
<dbReference type="SMR" id="Q4V862"/>
<dbReference type="DNASU" id="735101"/>
<dbReference type="GeneID" id="735101"/>
<dbReference type="KEGG" id="xla:735101"/>
<dbReference type="AGR" id="Xenbase:XB-GENE-483725"/>
<dbReference type="CTD" id="735101"/>
<dbReference type="Xenbase" id="XB-GENE-483725">
    <property type="gene designation" value="cdk9.S"/>
</dbReference>
<dbReference type="OrthoDB" id="204883at2759"/>
<dbReference type="Proteomes" id="UP000186698">
    <property type="component" value="Chromosome 8S"/>
</dbReference>
<dbReference type="Bgee" id="735101">
    <property type="expression patterns" value="Expressed in pancreas and 19 other cell types or tissues"/>
</dbReference>
<dbReference type="GO" id="GO:0005634">
    <property type="term" value="C:nucleus"/>
    <property type="evidence" value="ECO:0000318"/>
    <property type="project" value="GO_Central"/>
</dbReference>
<dbReference type="GO" id="GO:0070691">
    <property type="term" value="C:P-TEFb complex"/>
    <property type="evidence" value="ECO:0000250"/>
    <property type="project" value="UniProtKB"/>
</dbReference>
<dbReference type="GO" id="GO:0005524">
    <property type="term" value="F:ATP binding"/>
    <property type="evidence" value="ECO:0007669"/>
    <property type="project" value="UniProtKB-KW"/>
</dbReference>
<dbReference type="GO" id="GO:0004693">
    <property type="term" value="F:cyclin-dependent protein serine/threonine kinase activity"/>
    <property type="evidence" value="ECO:0000318"/>
    <property type="project" value="GO_Central"/>
</dbReference>
<dbReference type="GO" id="GO:0106310">
    <property type="term" value="F:protein serine kinase activity"/>
    <property type="evidence" value="ECO:0007669"/>
    <property type="project" value="RHEA"/>
</dbReference>
<dbReference type="GO" id="GO:0004674">
    <property type="term" value="F:protein serine/threonine kinase activity"/>
    <property type="evidence" value="ECO:0000250"/>
    <property type="project" value="UniProtKB"/>
</dbReference>
<dbReference type="GO" id="GO:0008353">
    <property type="term" value="F:RNA polymerase II CTD heptapeptide repeat kinase activity"/>
    <property type="evidence" value="ECO:0000318"/>
    <property type="project" value="GO_Central"/>
</dbReference>
<dbReference type="GO" id="GO:0120187">
    <property type="term" value="P:positive regulation of protein localization to chromatin"/>
    <property type="evidence" value="ECO:0000250"/>
    <property type="project" value="UniProtKB"/>
</dbReference>
<dbReference type="GO" id="GO:0045944">
    <property type="term" value="P:positive regulation of transcription by RNA polymerase II"/>
    <property type="evidence" value="ECO:0000250"/>
    <property type="project" value="UniProtKB"/>
</dbReference>
<dbReference type="GO" id="GO:0032968">
    <property type="term" value="P:positive regulation of transcription elongation by RNA polymerase II"/>
    <property type="evidence" value="ECO:0000250"/>
    <property type="project" value="UniProtKB"/>
</dbReference>
<dbReference type="CDD" id="cd07865">
    <property type="entry name" value="STKc_CDK9"/>
    <property type="match status" value="1"/>
</dbReference>
<dbReference type="FunFam" id="1.10.510.10:FF:000203">
    <property type="entry name" value="Cyclin-dependent kinase 9"/>
    <property type="match status" value="1"/>
</dbReference>
<dbReference type="FunFam" id="3.30.200.20:FF:000227">
    <property type="entry name" value="Cyclin-dependent kinase 9"/>
    <property type="match status" value="1"/>
</dbReference>
<dbReference type="Gene3D" id="3.30.200.20">
    <property type="entry name" value="Phosphorylase Kinase, domain 1"/>
    <property type="match status" value="1"/>
</dbReference>
<dbReference type="Gene3D" id="1.10.510.10">
    <property type="entry name" value="Transferase(Phosphotransferase) domain 1"/>
    <property type="match status" value="1"/>
</dbReference>
<dbReference type="InterPro" id="IPR050108">
    <property type="entry name" value="CDK"/>
</dbReference>
<dbReference type="InterPro" id="IPR011009">
    <property type="entry name" value="Kinase-like_dom_sf"/>
</dbReference>
<dbReference type="InterPro" id="IPR000719">
    <property type="entry name" value="Prot_kinase_dom"/>
</dbReference>
<dbReference type="InterPro" id="IPR017441">
    <property type="entry name" value="Protein_kinase_ATP_BS"/>
</dbReference>
<dbReference type="InterPro" id="IPR008271">
    <property type="entry name" value="Ser/Thr_kinase_AS"/>
</dbReference>
<dbReference type="PANTHER" id="PTHR24056">
    <property type="entry name" value="CELL DIVISION PROTEIN KINASE"/>
    <property type="match status" value="1"/>
</dbReference>
<dbReference type="PANTHER" id="PTHR24056:SF233">
    <property type="entry name" value="CYCLIN-DEPENDENT KINASE 9"/>
    <property type="match status" value="1"/>
</dbReference>
<dbReference type="Pfam" id="PF00069">
    <property type="entry name" value="Pkinase"/>
    <property type="match status" value="1"/>
</dbReference>
<dbReference type="SMART" id="SM00220">
    <property type="entry name" value="S_TKc"/>
    <property type="match status" value="1"/>
</dbReference>
<dbReference type="SUPFAM" id="SSF56112">
    <property type="entry name" value="Protein kinase-like (PK-like)"/>
    <property type="match status" value="1"/>
</dbReference>
<dbReference type="PROSITE" id="PS00107">
    <property type="entry name" value="PROTEIN_KINASE_ATP"/>
    <property type="match status" value="1"/>
</dbReference>
<dbReference type="PROSITE" id="PS50011">
    <property type="entry name" value="PROTEIN_KINASE_DOM"/>
    <property type="match status" value="1"/>
</dbReference>
<dbReference type="PROSITE" id="PS00108">
    <property type="entry name" value="PROTEIN_KINASE_ST"/>
    <property type="match status" value="1"/>
</dbReference>
<sequence>MAKNYDSVEFPYCDEVSKYERLAKIGQGTFGEVFKAKHRQTGKKVALKKVLMENEKEGFPITALREIKILQLLKHENVVNLIEICRTKVSPTANQYNRCKGTIFLVFDFCEHDLAGLLSNAHVKFTLSEIKKVMQMLLNGLYYIHRNKILHRDMKAANVLITRDGVLKLADFGLARAFSLAKNSQPNKYTNRVVTLWYRPPELLLGERDYGPPIDLWGAGCIMAEMWTRSPIMQGNTEQHQLTLISQLCGSITPEVWPNVDKYELYQKLELPKGQKRKVKDRLKAYVKDPHALDLIDKLLVLDPTQRLDSDDALNNDFFWSDPMPSDLKNMLSTHNQSMFEYLAPPRRRGGHMPQQPANQARNPAATNQSEFERVF</sequence>
<name>CDK9A_XENLA</name>
<proteinExistence type="evidence at transcript level"/>
<gene>
    <name type="primary">cdk9-a</name>
</gene>
<protein>
    <recommendedName>
        <fullName>Cyclin-dependent kinase 9-A</fullName>
        <ecNumber>2.7.11.22</ecNumber>
        <ecNumber>2.7.11.23</ecNumber>
    </recommendedName>
    <alternativeName>
        <fullName>Cell division protein kinase 9-A</fullName>
    </alternativeName>
</protein>
<organism>
    <name type="scientific">Xenopus laevis</name>
    <name type="common">African clawed frog</name>
    <dbReference type="NCBI Taxonomy" id="8355"/>
    <lineage>
        <taxon>Eukaryota</taxon>
        <taxon>Metazoa</taxon>
        <taxon>Chordata</taxon>
        <taxon>Craniata</taxon>
        <taxon>Vertebrata</taxon>
        <taxon>Euteleostomi</taxon>
        <taxon>Amphibia</taxon>
        <taxon>Batrachia</taxon>
        <taxon>Anura</taxon>
        <taxon>Pipoidea</taxon>
        <taxon>Pipidae</taxon>
        <taxon>Xenopodinae</taxon>
        <taxon>Xenopus</taxon>
        <taxon>Xenopus</taxon>
    </lineage>
</organism>
<feature type="chain" id="PRO_0000085804" description="Cyclin-dependent kinase 9-A">
    <location>
        <begin position="1"/>
        <end position="376"/>
    </location>
</feature>
<feature type="domain" description="Protein kinase" evidence="2">
    <location>
        <begin position="19"/>
        <end position="319"/>
    </location>
</feature>
<feature type="region of interest" description="Disordered" evidence="4">
    <location>
        <begin position="345"/>
        <end position="376"/>
    </location>
</feature>
<feature type="compositionally biased region" description="Low complexity" evidence="4">
    <location>
        <begin position="354"/>
        <end position="369"/>
    </location>
</feature>
<feature type="active site" description="Proton acceptor" evidence="2 3">
    <location>
        <position position="153"/>
    </location>
</feature>
<feature type="binding site" evidence="2">
    <location>
        <begin position="25"/>
        <end position="33"/>
    </location>
    <ligand>
        <name>ATP</name>
        <dbReference type="ChEBI" id="CHEBI:30616"/>
    </ligand>
</feature>
<feature type="binding site" evidence="2">
    <location>
        <position position="48"/>
    </location>
    <ligand>
        <name>ATP</name>
        <dbReference type="ChEBI" id="CHEBI:30616"/>
    </ligand>
</feature>
<keyword id="KW-0067">ATP-binding</keyword>
<keyword id="KW-0418">Kinase</keyword>
<keyword id="KW-0547">Nucleotide-binding</keyword>
<keyword id="KW-0539">Nucleus</keyword>
<keyword id="KW-1185">Reference proteome</keyword>
<keyword id="KW-0723">Serine/threonine-protein kinase</keyword>
<keyword id="KW-0804">Transcription</keyword>
<keyword id="KW-0805">Transcription regulation</keyword>
<keyword id="KW-0808">Transferase</keyword>